<dbReference type="EC" id="6.3.4.5" evidence="1"/>
<dbReference type="EMBL" id="AL954747">
    <property type="protein sequence ID" value="CAD85348.1"/>
    <property type="molecule type" value="Genomic_DNA"/>
</dbReference>
<dbReference type="RefSeq" id="WP_011112005.1">
    <property type="nucleotide sequence ID" value="NC_004757.1"/>
</dbReference>
<dbReference type="SMR" id="Q82UP5"/>
<dbReference type="STRING" id="228410.NE1437"/>
<dbReference type="GeneID" id="87104611"/>
<dbReference type="KEGG" id="neu:NE1437"/>
<dbReference type="eggNOG" id="COG0137">
    <property type="taxonomic scope" value="Bacteria"/>
</dbReference>
<dbReference type="HOGENOM" id="CLU_032784_4_2_4"/>
<dbReference type="OrthoDB" id="9801641at2"/>
<dbReference type="PhylomeDB" id="Q82UP5"/>
<dbReference type="UniPathway" id="UPA00068">
    <property type="reaction ID" value="UER00113"/>
</dbReference>
<dbReference type="Proteomes" id="UP000001416">
    <property type="component" value="Chromosome"/>
</dbReference>
<dbReference type="GO" id="GO:0005737">
    <property type="term" value="C:cytoplasm"/>
    <property type="evidence" value="ECO:0007669"/>
    <property type="project" value="UniProtKB-SubCell"/>
</dbReference>
<dbReference type="GO" id="GO:0004055">
    <property type="term" value="F:argininosuccinate synthase activity"/>
    <property type="evidence" value="ECO:0007669"/>
    <property type="project" value="UniProtKB-UniRule"/>
</dbReference>
<dbReference type="GO" id="GO:0005524">
    <property type="term" value="F:ATP binding"/>
    <property type="evidence" value="ECO:0007669"/>
    <property type="project" value="UniProtKB-UniRule"/>
</dbReference>
<dbReference type="GO" id="GO:0000053">
    <property type="term" value="P:argininosuccinate metabolic process"/>
    <property type="evidence" value="ECO:0007669"/>
    <property type="project" value="TreeGrafter"/>
</dbReference>
<dbReference type="GO" id="GO:0006526">
    <property type="term" value="P:L-arginine biosynthetic process"/>
    <property type="evidence" value="ECO:0007669"/>
    <property type="project" value="UniProtKB-UniRule"/>
</dbReference>
<dbReference type="GO" id="GO:0000050">
    <property type="term" value="P:urea cycle"/>
    <property type="evidence" value="ECO:0007669"/>
    <property type="project" value="TreeGrafter"/>
</dbReference>
<dbReference type="CDD" id="cd01999">
    <property type="entry name" value="ASS"/>
    <property type="match status" value="1"/>
</dbReference>
<dbReference type="FunFam" id="3.40.50.620:FF:000019">
    <property type="entry name" value="Argininosuccinate synthase"/>
    <property type="match status" value="1"/>
</dbReference>
<dbReference type="FunFam" id="3.90.1260.10:FF:000007">
    <property type="entry name" value="Argininosuccinate synthase"/>
    <property type="match status" value="1"/>
</dbReference>
<dbReference type="Gene3D" id="3.90.1260.10">
    <property type="entry name" value="Argininosuccinate synthetase, chain A, domain 2"/>
    <property type="match status" value="1"/>
</dbReference>
<dbReference type="Gene3D" id="3.40.50.620">
    <property type="entry name" value="HUPs"/>
    <property type="match status" value="1"/>
</dbReference>
<dbReference type="Gene3D" id="1.20.5.470">
    <property type="entry name" value="Single helix bin"/>
    <property type="match status" value="1"/>
</dbReference>
<dbReference type="HAMAP" id="MF_00005">
    <property type="entry name" value="Arg_succ_synth_type1"/>
    <property type="match status" value="1"/>
</dbReference>
<dbReference type="InterPro" id="IPR048268">
    <property type="entry name" value="Arginosuc_syn_C"/>
</dbReference>
<dbReference type="InterPro" id="IPR048267">
    <property type="entry name" value="Arginosuc_syn_N"/>
</dbReference>
<dbReference type="InterPro" id="IPR001518">
    <property type="entry name" value="Arginosuc_synth"/>
</dbReference>
<dbReference type="InterPro" id="IPR018223">
    <property type="entry name" value="Arginosuc_synth_CS"/>
</dbReference>
<dbReference type="InterPro" id="IPR023434">
    <property type="entry name" value="Arginosuc_synth_type_1_subfam"/>
</dbReference>
<dbReference type="InterPro" id="IPR024074">
    <property type="entry name" value="AS_cat/multimer_dom_body"/>
</dbReference>
<dbReference type="InterPro" id="IPR014729">
    <property type="entry name" value="Rossmann-like_a/b/a_fold"/>
</dbReference>
<dbReference type="NCBIfam" id="TIGR00032">
    <property type="entry name" value="argG"/>
    <property type="match status" value="1"/>
</dbReference>
<dbReference type="NCBIfam" id="NF001770">
    <property type="entry name" value="PRK00509.1"/>
    <property type="match status" value="1"/>
</dbReference>
<dbReference type="PANTHER" id="PTHR11587">
    <property type="entry name" value="ARGININOSUCCINATE SYNTHASE"/>
    <property type="match status" value="1"/>
</dbReference>
<dbReference type="PANTHER" id="PTHR11587:SF2">
    <property type="entry name" value="ARGININOSUCCINATE SYNTHASE"/>
    <property type="match status" value="1"/>
</dbReference>
<dbReference type="Pfam" id="PF20979">
    <property type="entry name" value="Arginosuc_syn_C"/>
    <property type="match status" value="1"/>
</dbReference>
<dbReference type="Pfam" id="PF00764">
    <property type="entry name" value="Arginosuc_synth"/>
    <property type="match status" value="1"/>
</dbReference>
<dbReference type="SUPFAM" id="SSF52402">
    <property type="entry name" value="Adenine nucleotide alpha hydrolases-like"/>
    <property type="match status" value="1"/>
</dbReference>
<dbReference type="SUPFAM" id="SSF69864">
    <property type="entry name" value="Argininosuccinate synthetase, C-terminal domain"/>
    <property type="match status" value="1"/>
</dbReference>
<dbReference type="PROSITE" id="PS00564">
    <property type="entry name" value="ARGININOSUCCIN_SYN_1"/>
    <property type="match status" value="1"/>
</dbReference>
<dbReference type="PROSITE" id="PS00565">
    <property type="entry name" value="ARGININOSUCCIN_SYN_2"/>
    <property type="match status" value="1"/>
</dbReference>
<organism>
    <name type="scientific">Nitrosomonas europaea (strain ATCC 19718 / CIP 103999 / KCTC 2705 / NBRC 14298)</name>
    <dbReference type="NCBI Taxonomy" id="228410"/>
    <lineage>
        <taxon>Bacteria</taxon>
        <taxon>Pseudomonadati</taxon>
        <taxon>Pseudomonadota</taxon>
        <taxon>Betaproteobacteria</taxon>
        <taxon>Nitrosomonadales</taxon>
        <taxon>Nitrosomonadaceae</taxon>
        <taxon>Nitrosomonas</taxon>
    </lineage>
</organism>
<accession>Q82UP5</accession>
<comment type="catalytic activity">
    <reaction evidence="1">
        <text>L-citrulline + L-aspartate + ATP = 2-(N(omega)-L-arginino)succinate + AMP + diphosphate + H(+)</text>
        <dbReference type="Rhea" id="RHEA:10932"/>
        <dbReference type="ChEBI" id="CHEBI:15378"/>
        <dbReference type="ChEBI" id="CHEBI:29991"/>
        <dbReference type="ChEBI" id="CHEBI:30616"/>
        <dbReference type="ChEBI" id="CHEBI:33019"/>
        <dbReference type="ChEBI" id="CHEBI:57472"/>
        <dbReference type="ChEBI" id="CHEBI:57743"/>
        <dbReference type="ChEBI" id="CHEBI:456215"/>
        <dbReference type="EC" id="6.3.4.5"/>
    </reaction>
</comment>
<comment type="pathway">
    <text evidence="1">Amino-acid biosynthesis; L-arginine biosynthesis; L-arginine from L-ornithine and carbamoyl phosphate: step 2/3.</text>
</comment>
<comment type="subunit">
    <text evidence="1">Homotetramer.</text>
</comment>
<comment type="subcellular location">
    <subcellularLocation>
        <location evidence="1">Cytoplasm</location>
    </subcellularLocation>
</comment>
<comment type="similarity">
    <text evidence="1">Belongs to the argininosuccinate synthase family. Type 1 subfamily.</text>
</comment>
<evidence type="ECO:0000255" key="1">
    <source>
        <dbReference type="HAMAP-Rule" id="MF_00005"/>
    </source>
</evidence>
<proteinExistence type="inferred from homology"/>
<sequence>MDKVKKAVLAFSGGLDTSVILKWLQDTYQCEVVTFTADIGQGEEIEPARAKAVQFGIREIFIEDLREEFVRDYVFPMFRANTIYEGEYLLGTSIARPLIAKRQVEIAQQTGADAVSHGATGKGNDQVRFELGYYALQPDIRVIAPWREWDLTSREKLLTYAEKQGIPIEMKQKAGSPYSMDANLLHISYEGRALEDPAAEPEESMWRWTVSPETAPSEPEYLDLEYERGDIVALNGERLSPAAILTRLNQLGGKHGIGRLDLVENRYVGMKSRGCYETPGGTIMLRAHRAIESITLDREVAHLKDDLMPRYAALIYNGYWWSPERKLLQVLIDESQVNVNGRVRVKLYKGNVMVVGRDSRTDSLFDPDIATFEEDGGAYHQADAAGFIKLNALRMRIAKALRRC</sequence>
<gene>
    <name evidence="1" type="primary">argG</name>
    <name type="ordered locus">NE1437</name>
</gene>
<keyword id="KW-0028">Amino-acid biosynthesis</keyword>
<keyword id="KW-0055">Arginine biosynthesis</keyword>
<keyword id="KW-0067">ATP-binding</keyword>
<keyword id="KW-0963">Cytoplasm</keyword>
<keyword id="KW-0436">Ligase</keyword>
<keyword id="KW-0547">Nucleotide-binding</keyword>
<keyword id="KW-1185">Reference proteome</keyword>
<protein>
    <recommendedName>
        <fullName evidence="1">Argininosuccinate synthase</fullName>
        <ecNumber evidence="1">6.3.4.5</ecNumber>
    </recommendedName>
    <alternativeName>
        <fullName evidence="1">Citrulline--aspartate ligase</fullName>
    </alternativeName>
</protein>
<name>ASSY_NITEU</name>
<feature type="chain" id="PRO_0000148618" description="Argininosuccinate synthase">
    <location>
        <begin position="1"/>
        <end position="404"/>
    </location>
</feature>
<feature type="binding site" evidence="1">
    <location>
        <begin position="10"/>
        <end position="18"/>
    </location>
    <ligand>
        <name>ATP</name>
        <dbReference type="ChEBI" id="CHEBI:30616"/>
    </ligand>
</feature>
<feature type="binding site" evidence="1">
    <location>
        <position position="37"/>
    </location>
    <ligand>
        <name>ATP</name>
        <dbReference type="ChEBI" id="CHEBI:30616"/>
    </ligand>
</feature>
<feature type="binding site" evidence="1">
    <location>
        <position position="88"/>
    </location>
    <ligand>
        <name>L-citrulline</name>
        <dbReference type="ChEBI" id="CHEBI:57743"/>
    </ligand>
</feature>
<feature type="binding site" evidence="1">
    <location>
        <position position="93"/>
    </location>
    <ligand>
        <name>L-citrulline</name>
        <dbReference type="ChEBI" id="CHEBI:57743"/>
    </ligand>
</feature>
<feature type="binding site" evidence="1">
    <location>
        <position position="118"/>
    </location>
    <ligand>
        <name>ATP</name>
        <dbReference type="ChEBI" id="CHEBI:30616"/>
    </ligand>
</feature>
<feature type="binding site" evidence="1">
    <location>
        <position position="120"/>
    </location>
    <ligand>
        <name>L-aspartate</name>
        <dbReference type="ChEBI" id="CHEBI:29991"/>
    </ligand>
</feature>
<feature type="binding site" evidence="1">
    <location>
        <position position="124"/>
    </location>
    <ligand>
        <name>L-aspartate</name>
        <dbReference type="ChEBI" id="CHEBI:29991"/>
    </ligand>
</feature>
<feature type="binding site" evidence="1">
    <location>
        <position position="124"/>
    </location>
    <ligand>
        <name>L-citrulline</name>
        <dbReference type="ChEBI" id="CHEBI:57743"/>
    </ligand>
</feature>
<feature type="binding site" evidence="1">
    <location>
        <position position="125"/>
    </location>
    <ligand>
        <name>L-aspartate</name>
        <dbReference type="ChEBI" id="CHEBI:29991"/>
    </ligand>
</feature>
<feature type="binding site" evidence="1">
    <location>
        <position position="128"/>
    </location>
    <ligand>
        <name>L-citrulline</name>
        <dbReference type="ChEBI" id="CHEBI:57743"/>
    </ligand>
</feature>
<feature type="binding site" evidence="1">
    <location>
        <position position="179"/>
    </location>
    <ligand>
        <name>L-citrulline</name>
        <dbReference type="ChEBI" id="CHEBI:57743"/>
    </ligand>
</feature>
<feature type="binding site" evidence="1">
    <location>
        <position position="188"/>
    </location>
    <ligand>
        <name>L-citrulline</name>
        <dbReference type="ChEBI" id="CHEBI:57743"/>
    </ligand>
</feature>
<feature type="binding site" evidence="1">
    <location>
        <position position="264"/>
    </location>
    <ligand>
        <name>L-citrulline</name>
        <dbReference type="ChEBI" id="CHEBI:57743"/>
    </ligand>
</feature>
<feature type="binding site" evidence="1">
    <location>
        <position position="276"/>
    </location>
    <ligand>
        <name>L-citrulline</name>
        <dbReference type="ChEBI" id="CHEBI:57743"/>
    </ligand>
</feature>
<reference key="1">
    <citation type="journal article" date="2003" name="J. Bacteriol.">
        <title>Complete genome sequence of the ammonia-oxidizing bacterium and obligate chemolithoautotroph Nitrosomonas europaea.</title>
        <authorList>
            <person name="Chain P."/>
            <person name="Lamerdin J.E."/>
            <person name="Larimer F.W."/>
            <person name="Regala W."/>
            <person name="Lao V."/>
            <person name="Land M.L."/>
            <person name="Hauser L."/>
            <person name="Hooper A.B."/>
            <person name="Klotz M.G."/>
            <person name="Norton J."/>
            <person name="Sayavedra-Soto L.A."/>
            <person name="Arciero D.M."/>
            <person name="Hommes N.G."/>
            <person name="Whittaker M.M."/>
            <person name="Arp D.J."/>
        </authorList>
    </citation>
    <scope>NUCLEOTIDE SEQUENCE [LARGE SCALE GENOMIC DNA]</scope>
    <source>
        <strain>ATCC 19718 / CIP 103999 / KCTC 2705 / NBRC 14298</strain>
    </source>
</reference>